<comment type="function">
    <text evidence="1">Could be a nuclease involved in processing of the 5'-end of pre-16S rRNA.</text>
</comment>
<comment type="subcellular location">
    <subcellularLocation>
        <location evidence="1">Cytoplasm</location>
    </subcellularLocation>
</comment>
<comment type="similarity">
    <text evidence="1">Belongs to the YqgF nuclease family.</text>
</comment>
<organism>
    <name type="scientific">Caldanaerobacter subterraneus subsp. tengcongensis (strain DSM 15242 / JCM 11007 / NBRC 100824 / MB4)</name>
    <name type="common">Thermoanaerobacter tengcongensis</name>
    <dbReference type="NCBI Taxonomy" id="273068"/>
    <lineage>
        <taxon>Bacteria</taxon>
        <taxon>Bacillati</taxon>
        <taxon>Bacillota</taxon>
        <taxon>Clostridia</taxon>
        <taxon>Thermoanaerobacterales</taxon>
        <taxon>Thermoanaerobacteraceae</taxon>
        <taxon>Caldanaerobacter</taxon>
    </lineage>
</organism>
<reference key="1">
    <citation type="journal article" date="2002" name="Genome Res.">
        <title>A complete sequence of the T. tengcongensis genome.</title>
        <authorList>
            <person name="Bao Q."/>
            <person name="Tian Y."/>
            <person name="Li W."/>
            <person name="Xu Z."/>
            <person name="Xuan Z."/>
            <person name="Hu S."/>
            <person name="Dong W."/>
            <person name="Yang J."/>
            <person name="Chen Y."/>
            <person name="Xue Y."/>
            <person name="Xu Y."/>
            <person name="Lai X."/>
            <person name="Huang L."/>
            <person name="Dong X."/>
            <person name="Ma Y."/>
            <person name="Ling L."/>
            <person name="Tan H."/>
            <person name="Chen R."/>
            <person name="Wang J."/>
            <person name="Yu J."/>
            <person name="Yang H."/>
        </authorList>
    </citation>
    <scope>NUCLEOTIDE SEQUENCE [LARGE SCALE GENOMIC DNA]</scope>
    <source>
        <strain>DSM 15242 / JCM 11007 / NBRC 100824 / MB4</strain>
    </source>
</reference>
<evidence type="ECO:0000255" key="1">
    <source>
        <dbReference type="HAMAP-Rule" id="MF_00651"/>
    </source>
</evidence>
<keyword id="KW-0963">Cytoplasm</keyword>
<keyword id="KW-0378">Hydrolase</keyword>
<keyword id="KW-0540">Nuclease</keyword>
<keyword id="KW-1185">Reference proteome</keyword>
<keyword id="KW-0690">Ribosome biogenesis</keyword>
<gene>
    <name type="ordered locus">TTE1250</name>
</gene>
<dbReference type="EC" id="3.1.-.-" evidence="1"/>
<dbReference type="EMBL" id="AE008691">
    <property type="protein sequence ID" value="AAM24474.1"/>
    <property type="molecule type" value="Genomic_DNA"/>
</dbReference>
<dbReference type="SMR" id="Q8R5S9"/>
<dbReference type="STRING" id="273068.TTE1250"/>
<dbReference type="KEGG" id="tte:TTE1250"/>
<dbReference type="eggNOG" id="COG0816">
    <property type="taxonomic scope" value="Bacteria"/>
</dbReference>
<dbReference type="HOGENOM" id="CLU_098240_2_0_9"/>
<dbReference type="OrthoDB" id="9796140at2"/>
<dbReference type="Proteomes" id="UP000000555">
    <property type="component" value="Chromosome"/>
</dbReference>
<dbReference type="GO" id="GO:0005829">
    <property type="term" value="C:cytosol"/>
    <property type="evidence" value="ECO:0007669"/>
    <property type="project" value="TreeGrafter"/>
</dbReference>
<dbReference type="GO" id="GO:0004518">
    <property type="term" value="F:nuclease activity"/>
    <property type="evidence" value="ECO:0007669"/>
    <property type="project" value="UniProtKB-KW"/>
</dbReference>
<dbReference type="GO" id="GO:0000967">
    <property type="term" value="P:rRNA 5'-end processing"/>
    <property type="evidence" value="ECO:0007669"/>
    <property type="project" value="UniProtKB-UniRule"/>
</dbReference>
<dbReference type="CDD" id="cd16964">
    <property type="entry name" value="YqgF"/>
    <property type="match status" value="1"/>
</dbReference>
<dbReference type="Gene3D" id="3.30.420.140">
    <property type="entry name" value="YqgF/RNase H-like domain"/>
    <property type="match status" value="1"/>
</dbReference>
<dbReference type="HAMAP" id="MF_00651">
    <property type="entry name" value="Nuclease_YqgF"/>
    <property type="match status" value="1"/>
</dbReference>
<dbReference type="InterPro" id="IPR012337">
    <property type="entry name" value="RNaseH-like_sf"/>
</dbReference>
<dbReference type="InterPro" id="IPR005227">
    <property type="entry name" value="YqgF"/>
</dbReference>
<dbReference type="InterPro" id="IPR006641">
    <property type="entry name" value="YqgF/RNaseH-like_dom"/>
</dbReference>
<dbReference type="InterPro" id="IPR037027">
    <property type="entry name" value="YqgF/RNaseH-like_dom_sf"/>
</dbReference>
<dbReference type="NCBIfam" id="TIGR00250">
    <property type="entry name" value="RNAse_H_YqgF"/>
    <property type="match status" value="1"/>
</dbReference>
<dbReference type="PANTHER" id="PTHR33317">
    <property type="entry name" value="POLYNUCLEOTIDYL TRANSFERASE, RIBONUCLEASE H-LIKE SUPERFAMILY PROTEIN"/>
    <property type="match status" value="1"/>
</dbReference>
<dbReference type="PANTHER" id="PTHR33317:SF4">
    <property type="entry name" value="POLYNUCLEOTIDYL TRANSFERASE, RIBONUCLEASE H-LIKE SUPERFAMILY PROTEIN"/>
    <property type="match status" value="1"/>
</dbReference>
<dbReference type="Pfam" id="PF03652">
    <property type="entry name" value="RuvX"/>
    <property type="match status" value="1"/>
</dbReference>
<dbReference type="SMART" id="SM00732">
    <property type="entry name" value="YqgFc"/>
    <property type="match status" value="1"/>
</dbReference>
<dbReference type="SUPFAM" id="SSF53098">
    <property type="entry name" value="Ribonuclease H-like"/>
    <property type="match status" value="1"/>
</dbReference>
<proteinExistence type="inferred from homology"/>
<feature type="chain" id="PRO_0000172165" description="Putative pre-16S rRNA nuclease">
    <location>
        <begin position="1"/>
        <end position="139"/>
    </location>
</feature>
<accession>Q8R5S9</accession>
<sequence length="139" mass="15474">MRVLGLDVGDKTIGVAISDVSSTIAQGITTIRRKSFVEDVKAIEEIVKKYSVEKVVVGLPKNMNGSIGPQGEKVIKFGEKLREVLRIPVVFWDERLTTLQAERFLIEGVDMSRGKRKKVIDKLAATIILQSYLDSQKNS</sequence>
<name>YQGF_CALS4</name>
<protein>
    <recommendedName>
        <fullName evidence="1">Putative pre-16S rRNA nuclease</fullName>
        <ecNumber evidence="1">3.1.-.-</ecNumber>
    </recommendedName>
</protein>